<accession>A8I467</accession>
<gene>
    <name evidence="1" type="primary">pyrH</name>
    <name type="ordered locus">AZC_1695</name>
</gene>
<keyword id="KW-0067">ATP-binding</keyword>
<keyword id="KW-0963">Cytoplasm</keyword>
<keyword id="KW-0418">Kinase</keyword>
<keyword id="KW-0547">Nucleotide-binding</keyword>
<keyword id="KW-0665">Pyrimidine biosynthesis</keyword>
<keyword id="KW-1185">Reference proteome</keyword>
<keyword id="KW-0808">Transferase</keyword>
<organism>
    <name type="scientific">Azorhizobium caulinodans (strain ATCC 43989 / DSM 5975 / JCM 20966 / LMG 6465 / NBRC 14845 / NCIMB 13405 / ORS 571)</name>
    <dbReference type="NCBI Taxonomy" id="438753"/>
    <lineage>
        <taxon>Bacteria</taxon>
        <taxon>Pseudomonadati</taxon>
        <taxon>Pseudomonadota</taxon>
        <taxon>Alphaproteobacteria</taxon>
        <taxon>Hyphomicrobiales</taxon>
        <taxon>Xanthobacteraceae</taxon>
        <taxon>Azorhizobium</taxon>
    </lineage>
</organism>
<reference key="1">
    <citation type="submission" date="2007-04" db="EMBL/GenBank/DDBJ databases">
        <title>Complete genome sequence of the nitrogen-fixing bacterium Azorhizobium caulinodans ORS571.</title>
        <authorList>
            <person name="Lee K.B."/>
            <person name="Backer P.D."/>
            <person name="Aono T."/>
            <person name="Liu C.T."/>
            <person name="Suzuki S."/>
            <person name="Suzuki T."/>
            <person name="Kaneko T."/>
            <person name="Yamada M."/>
            <person name="Tabata S."/>
            <person name="Kupfer D.M."/>
            <person name="Najar F.Z."/>
            <person name="Wiley G.B."/>
            <person name="Roe B."/>
            <person name="Binnewies T."/>
            <person name="Ussery D."/>
            <person name="Vereecke D."/>
            <person name="Gevers D."/>
            <person name="Holsters M."/>
            <person name="Oyaizu H."/>
        </authorList>
    </citation>
    <scope>NUCLEOTIDE SEQUENCE [LARGE SCALE GENOMIC DNA]</scope>
    <source>
        <strain>ATCC 43989 / DSM 5975 / JCM 20966 / LMG 6465 / NBRC 14845 / NCIMB 13405 / ORS 571</strain>
    </source>
</reference>
<evidence type="ECO:0000255" key="1">
    <source>
        <dbReference type="HAMAP-Rule" id="MF_01220"/>
    </source>
</evidence>
<comment type="function">
    <text evidence="1">Catalyzes the reversible phosphorylation of UMP to UDP.</text>
</comment>
<comment type="catalytic activity">
    <reaction evidence="1">
        <text>UMP + ATP = UDP + ADP</text>
        <dbReference type="Rhea" id="RHEA:24400"/>
        <dbReference type="ChEBI" id="CHEBI:30616"/>
        <dbReference type="ChEBI" id="CHEBI:57865"/>
        <dbReference type="ChEBI" id="CHEBI:58223"/>
        <dbReference type="ChEBI" id="CHEBI:456216"/>
        <dbReference type="EC" id="2.7.4.22"/>
    </reaction>
</comment>
<comment type="activity regulation">
    <text evidence="1">Inhibited by UTP.</text>
</comment>
<comment type="pathway">
    <text evidence="1">Pyrimidine metabolism; CTP biosynthesis via de novo pathway; UDP from UMP (UMPK route): step 1/1.</text>
</comment>
<comment type="subunit">
    <text evidence="1">Homohexamer.</text>
</comment>
<comment type="subcellular location">
    <subcellularLocation>
        <location evidence="1">Cytoplasm</location>
    </subcellularLocation>
</comment>
<comment type="similarity">
    <text evidence="1">Belongs to the UMP kinase family.</text>
</comment>
<proteinExistence type="inferred from homology"/>
<sequence>MPGLPYPRILVKVSGEALMGSEPFGLHPPTVARIARELVAARELGCEVAVVVGGGNILRGARVAGEDLDRSTADHMGMLATVMNCLALEAAVEAAGQPARTMSAIPMPTVCEPYARQPAQRHLRRGRVVLLAGGTGNPYFTTDTGAVLRAAELDCDAVLKATNVDGVYTADPKTDPTATRYERITHDQALAYDLKVMDAAAFALAREASLPIIVFSIRDPGAIVAAAQGEGRVTVVSP</sequence>
<dbReference type="EC" id="2.7.4.22" evidence="1"/>
<dbReference type="EMBL" id="AP009384">
    <property type="protein sequence ID" value="BAF87693.1"/>
    <property type="molecule type" value="Genomic_DNA"/>
</dbReference>
<dbReference type="RefSeq" id="WP_012170223.1">
    <property type="nucleotide sequence ID" value="NC_009937.1"/>
</dbReference>
<dbReference type="SMR" id="A8I467"/>
<dbReference type="STRING" id="438753.AZC_1695"/>
<dbReference type="KEGG" id="azc:AZC_1695"/>
<dbReference type="eggNOG" id="COG0528">
    <property type="taxonomic scope" value="Bacteria"/>
</dbReference>
<dbReference type="HOGENOM" id="CLU_033861_0_0_5"/>
<dbReference type="UniPathway" id="UPA00159">
    <property type="reaction ID" value="UER00275"/>
</dbReference>
<dbReference type="Proteomes" id="UP000000270">
    <property type="component" value="Chromosome"/>
</dbReference>
<dbReference type="GO" id="GO:0005829">
    <property type="term" value="C:cytosol"/>
    <property type="evidence" value="ECO:0007669"/>
    <property type="project" value="TreeGrafter"/>
</dbReference>
<dbReference type="GO" id="GO:0005524">
    <property type="term" value="F:ATP binding"/>
    <property type="evidence" value="ECO:0007669"/>
    <property type="project" value="UniProtKB-KW"/>
</dbReference>
<dbReference type="GO" id="GO:0033862">
    <property type="term" value="F:UMP kinase activity"/>
    <property type="evidence" value="ECO:0007669"/>
    <property type="project" value="UniProtKB-EC"/>
</dbReference>
<dbReference type="GO" id="GO:0044210">
    <property type="term" value="P:'de novo' CTP biosynthetic process"/>
    <property type="evidence" value="ECO:0007669"/>
    <property type="project" value="UniProtKB-UniRule"/>
</dbReference>
<dbReference type="GO" id="GO:0006225">
    <property type="term" value="P:UDP biosynthetic process"/>
    <property type="evidence" value="ECO:0007669"/>
    <property type="project" value="TreeGrafter"/>
</dbReference>
<dbReference type="CDD" id="cd04254">
    <property type="entry name" value="AAK_UMPK-PyrH-Ec"/>
    <property type="match status" value="1"/>
</dbReference>
<dbReference type="FunFam" id="3.40.1160.10:FF:000001">
    <property type="entry name" value="Uridylate kinase"/>
    <property type="match status" value="1"/>
</dbReference>
<dbReference type="Gene3D" id="3.40.1160.10">
    <property type="entry name" value="Acetylglutamate kinase-like"/>
    <property type="match status" value="1"/>
</dbReference>
<dbReference type="HAMAP" id="MF_01220_B">
    <property type="entry name" value="PyrH_B"/>
    <property type="match status" value="1"/>
</dbReference>
<dbReference type="InterPro" id="IPR036393">
    <property type="entry name" value="AceGlu_kinase-like_sf"/>
</dbReference>
<dbReference type="InterPro" id="IPR001048">
    <property type="entry name" value="Asp/Glu/Uridylate_kinase"/>
</dbReference>
<dbReference type="InterPro" id="IPR011817">
    <property type="entry name" value="Uridylate_kinase"/>
</dbReference>
<dbReference type="InterPro" id="IPR015963">
    <property type="entry name" value="Uridylate_kinase_bac"/>
</dbReference>
<dbReference type="NCBIfam" id="TIGR02075">
    <property type="entry name" value="pyrH_bact"/>
    <property type="match status" value="1"/>
</dbReference>
<dbReference type="PANTHER" id="PTHR42833">
    <property type="entry name" value="URIDYLATE KINASE"/>
    <property type="match status" value="1"/>
</dbReference>
<dbReference type="PANTHER" id="PTHR42833:SF4">
    <property type="entry name" value="URIDYLATE KINASE PUMPKIN, CHLOROPLASTIC"/>
    <property type="match status" value="1"/>
</dbReference>
<dbReference type="Pfam" id="PF00696">
    <property type="entry name" value="AA_kinase"/>
    <property type="match status" value="1"/>
</dbReference>
<dbReference type="PIRSF" id="PIRSF005650">
    <property type="entry name" value="Uridylate_kin"/>
    <property type="match status" value="1"/>
</dbReference>
<dbReference type="SUPFAM" id="SSF53633">
    <property type="entry name" value="Carbamate kinase-like"/>
    <property type="match status" value="1"/>
</dbReference>
<name>PYRH_AZOC5</name>
<protein>
    <recommendedName>
        <fullName evidence="1">Uridylate kinase</fullName>
        <shortName evidence="1">UK</shortName>
        <ecNumber evidence="1">2.7.4.22</ecNumber>
    </recommendedName>
    <alternativeName>
        <fullName evidence="1">Uridine monophosphate kinase</fullName>
        <shortName evidence="1">UMP kinase</shortName>
        <shortName evidence="1">UMPK</shortName>
    </alternativeName>
</protein>
<feature type="chain" id="PRO_0000323790" description="Uridylate kinase">
    <location>
        <begin position="1"/>
        <end position="238"/>
    </location>
</feature>
<feature type="binding site" evidence="1">
    <location>
        <begin position="12"/>
        <end position="15"/>
    </location>
    <ligand>
        <name>ATP</name>
        <dbReference type="ChEBI" id="CHEBI:30616"/>
    </ligand>
</feature>
<feature type="binding site" evidence="1">
    <location>
        <position position="54"/>
    </location>
    <ligand>
        <name>UMP</name>
        <dbReference type="ChEBI" id="CHEBI:57865"/>
    </ligand>
</feature>
<feature type="binding site" evidence="1">
    <location>
        <position position="55"/>
    </location>
    <ligand>
        <name>ATP</name>
        <dbReference type="ChEBI" id="CHEBI:30616"/>
    </ligand>
</feature>
<feature type="binding site" evidence="1">
    <location>
        <position position="59"/>
    </location>
    <ligand>
        <name>ATP</name>
        <dbReference type="ChEBI" id="CHEBI:30616"/>
    </ligand>
</feature>
<feature type="binding site" evidence="1">
    <location>
        <position position="74"/>
    </location>
    <ligand>
        <name>UMP</name>
        <dbReference type="ChEBI" id="CHEBI:57865"/>
    </ligand>
</feature>
<feature type="binding site" evidence="1">
    <location>
        <begin position="135"/>
        <end position="142"/>
    </location>
    <ligand>
        <name>UMP</name>
        <dbReference type="ChEBI" id="CHEBI:57865"/>
    </ligand>
</feature>
<feature type="binding site" evidence="1">
    <location>
        <position position="162"/>
    </location>
    <ligand>
        <name>ATP</name>
        <dbReference type="ChEBI" id="CHEBI:30616"/>
    </ligand>
</feature>
<feature type="binding site" evidence="1">
    <location>
        <position position="163"/>
    </location>
    <ligand>
        <name>ATP</name>
        <dbReference type="ChEBI" id="CHEBI:30616"/>
    </ligand>
</feature>
<feature type="binding site" evidence="1">
    <location>
        <position position="168"/>
    </location>
    <ligand>
        <name>ATP</name>
        <dbReference type="ChEBI" id="CHEBI:30616"/>
    </ligand>
</feature>
<feature type="binding site" evidence="1">
    <location>
        <position position="171"/>
    </location>
    <ligand>
        <name>ATP</name>
        <dbReference type="ChEBI" id="CHEBI:30616"/>
    </ligand>
</feature>